<sequence>MKGTKLAVVVGMTVAAVSLAAPAQADDYDAPFNNTIHRFGIYGPQDYNAWLAKISCERLSRGVDGDAYKSATFLQRNLPRGTTQGQAFQFLGAAIDHYCPEHVGVLQRAGTR</sequence>
<evidence type="ECO:0000255" key="1"/>
<organism>
    <name type="scientific">Mycobacterium tuberculosis (strain CDC 1551 / Oshkosh)</name>
    <dbReference type="NCBI Taxonomy" id="83331"/>
    <lineage>
        <taxon>Bacteria</taxon>
        <taxon>Bacillati</taxon>
        <taxon>Actinomycetota</taxon>
        <taxon>Actinomycetes</taxon>
        <taxon>Mycobacteriales</taxon>
        <taxon>Mycobacteriaceae</taxon>
        <taxon>Mycobacterium</taxon>
        <taxon>Mycobacterium tuberculosis complex</taxon>
    </lineage>
</organism>
<keyword id="KW-1185">Reference proteome</keyword>
<keyword id="KW-0732">Signal</keyword>
<feature type="signal peptide" evidence="1">
    <location>
        <begin position="1"/>
        <end position="25"/>
    </location>
</feature>
<feature type="chain" id="PRO_0000427634" description="Uncharacterized protein MT0585">
    <location>
        <begin position="26"/>
        <end position="112"/>
    </location>
</feature>
<proteinExistence type="inferred from homology"/>
<name>Y559_MYCTO</name>
<accession>P9WKL2</accession>
<accession>F2GMK4</accession>
<accession>L0T718</accession>
<accession>O06425</accession>
<accession>Q7D9M9</accession>
<protein>
    <recommendedName>
        <fullName>Uncharacterized protein MT0585</fullName>
    </recommendedName>
</protein>
<gene>
    <name type="ordered locus">MT0585</name>
</gene>
<reference key="1">
    <citation type="journal article" date="2002" name="J. Bacteriol.">
        <title>Whole-genome comparison of Mycobacterium tuberculosis clinical and laboratory strains.</title>
        <authorList>
            <person name="Fleischmann R.D."/>
            <person name="Alland D."/>
            <person name="Eisen J.A."/>
            <person name="Carpenter L."/>
            <person name="White O."/>
            <person name="Peterson J.D."/>
            <person name="DeBoy R.T."/>
            <person name="Dodson R.J."/>
            <person name="Gwinn M.L."/>
            <person name="Haft D.H."/>
            <person name="Hickey E.K."/>
            <person name="Kolonay J.F."/>
            <person name="Nelson W.C."/>
            <person name="Umayam L.A."/>
            <person name="Ermolaeva M.D."/>
            <person name="Salzberg S.L."/>
            <person name="Delcher A."/>
            <person name="Utterback T.R."/>
            <person name="Weidman J.F."/>
            <person name="Khouri H.M."/>
            <person name="Gill J."/>
            <person name="Mikula A."/>
            <person name="Bishai W."/>
            <person name="Jacobs W.R. Jr."/>
            <person name="Venter J.C."/>
            <person name="Fraser C.M."/>
        </authorList>
    </citation>
    <scope>NUCLEOTIDE SEQUENCE [LARGE SCALE GENOMIC DNA]</scope>
    <source>
        <strain>CDC 1551 / Oshkosh</strain>
    </source>
</reference>
<dbReference type="EMBL" id="AE000516">
    <property type="protein sequence ID" value="AAK44808.1"/>
    <property type="molecule type" value="Genomic_DNA"/>
</dbReference>
<dbReference type="PIR" id="B70549">
    <property type="entry name" value="B70549"/>
</dbReference>
<dbReference type="RefSeq" id="WP_003402937.1">
    <property type="nucleotide sequence ID" value="NZ_KK341227.1"/>
</dbReference>
<dbReference type="KEGG" id="mtc:MT0585"/>
<dbReference type="PATRIC" id="fig|83331.31.peg.616"/>
<dbReference type="HOGENOM" id="CLU_2155583_0_0_11"/>
<dbReference type="Proteomes" id="UP000001020">
    <property type="component" value="Chromosome"/>
</dbReference>
<dbReference type="InterPro" id="IPR007969">
    <property type="entry name" value="DUF732"/>
</dbReference>
<dbReference type="Pfam" id="PF05305">
    <property type="entry name" value="DUF732"/>
    <property type="match status" value="1"/>
</dbReference>